<feature type="chain" id="PRO_1000118492" description="1-deoxy-D-xylulose 5-phosphate reductoisomerase">
    <location>
        <begin position="1"/>
        <end position="380"/>
    </location>
</feature>
<feature type="binding site" evidence="1">
    <location>
        <position position="10"/>
    </location>
    <ligand>
        <name>NADPH</name>
        <dbReference type="ChEBI" id="CHEBI:57783"/>
    </ligand>
</feature>
<feature type="binding site" evidence="1">
    <location>
        <position position="11"/>
    </location>
    <ligand>
        <name>NADPH</name>
        <dbReference type="ChEBI" id="CHEBI:57783"/>
    </ligand>
</feature>
<feature type="binding site" evidence="1">
    <location>
        <position position="12"/>
    </location>
    <ligand>
        <name>NADPH</name>
        <dbReference type="ChEBI" id="CHEBI:57783"/>
    </ligand>
</feature>
<feature type="binding site" evidence="1">
    <location>
        <position position="13"/>
    </location>
    <ligand>
        <name>NADPH</name>
        <dbReference type="ChEBI" id="CHEBI:57783"/>
    </ligand>
</feature>
<feature type="binding site" evidence="1">
    <location>
        <position position="36"/>
    </location>
    <ligand>
        <name>NADPH</name>
        <dbReference type="ChEBI" id="CHEBI:57783"/>
    </ligand>
</feature>
<feature type="binding site" evidence="1">
    <location>
        <position position="37"/>
    </location>
    <ligand>
        <name>NADPH</name>
        <dbReference type="ChEBI" id="CHEBI:57783"/>
    </ligand>
</feature>
<feature type="binding site" evidence="1">
    <location>
        <position position="38"/>
    </location>
    <ligand>
        <name>NADPH</name>
        <dbReference type="ChEBI" id="CHEBI:57783"/>
    </ligand>
</feature>
<feature type="binding site" evidence="1">
    <location>
        <position position="120"/>
    </location>
    <ligand>
        <name>NADPH</name>
        <dbReference type="ChEBI" id="CHEBI:57783"/>
    </ligand>
</feature>
<feature type="binding site" evidence="1">
    <location>
        <position position="121"/>
    </location>
    <ligand>
        <name>1-deoxy-D-xylulose 5-phosphate</name>
        <dbReference type="ChEBI" id="CHEBI:57792"/>
    </ligand>
</feature>
<feature type="binding site" evidence="1">
    <location>
        <position position="122"/>
    </location>
    <ligand>
        <name>NADPH</name>
        <dbReference type="ChEBI" id="CHEBI:57783"/>
    </ligand>
</feature>
<feature type="binding site" evidence="1">
    <location>
        <position position="146"/>
    </location>
    <ligand>
        <name>Mn(2+)</name>
        <dbReference type="ChEBI" id="CHEBI:29035"/>
    </ligand>
</feature>
<feature type="binding site" evidence="1">
    <location>
        <position position="147"/>
    </location>
    <ligand>
        <name>1-deoxy-D-xylulose 5-phosphate</name>
        <dbReference type="ChEBI" id="CHEBI:57792"/>
    </ligand>
</feature>
<feature type="binding site" evidence="1">
    <location>
        <position position="148"/>
    </location>
    <ligand>
        <name>1-deoxy-D-xylulose 5-phosphate</name>
        <dbReference type="ChEBI" id="CHEBI:57792"/>
    </ligand>
</feature>
<feature type="binding site" evidence="1">
    <location>
        <position position="148"/>
    </location>
    <ligand>
        <name>Mn(2+)</name>
        <dbReference type="ChEBI" id="CHEBI:29035"/>
    </ligand>
</feature>
<feature type="binding site" evidence="1">
    <location>
        <position position="172"/>
    </location>
    <ligand>
        <name>1-deoxy-D-xylulose 5-phosphate</name>
        <dbReference type="ChEBI" id="CHEBI:57792"/>
    </ligand>
</feature>
<feature type="binding site" evidence="1">
    <location>
        <position position="195"/>
    </location>
    <ligand>
        <name>1-deoxy-D-xylulose 5-phosphate</name>
        <dbReference type="ChEBI" id="CHEBI:57792"/>
    </ligand>
</feature>
<feature type="binding site" evidence="1">
    <location>
        <position position="201"/>
    </location>
    <ligand>
        <name>NADPH</name>
        <dbReference type="ChEBI" id="CHEBI:57783"/>
    </ligand>
</feature>
<feature type="binding site" evidence="1">
    <location>
        <position position="208"/>
    </location>
    <ligand>
        <name>1-deoxy-D-xylulose 5-phosphate</name>
        <dbReference type="ChEBI" id="CHEBI:57792"/>
    </ligand>
</feature>
<feature type="binding site" evidence="1">
    <location>
        <position position="213"/>
    </location>
    <ligand>
        <name>1-deoxy-D-xylulose 5-phosphate</name>
        <dbReference type="ChEBI" id="CHEBI:57792"/>
    </ligand>
</feature>
<feature type="binding site" evidence="1">
    <location>
        <position position="214"/>
    </location>
    <ligand>
        <name>1-deoxy-D-xylulose 5-phosphate</name>
        <dbReference type="ChEBI" id="CHEBI:57792"/>
    </ligand>
</feature>
<feature type="binding site" evidence="1">
    <location>
        <position position="217"/>
    </location>
    <ligand>
        <name>1-deoxy-D-xylulose 5-phosphate</name>
        <dbReference type="ChEBI" id="CHEBI:57792"/>
    </ligand>
</feature>
<feature type="binding site" evidence="1">
    <location>
        <position position="217"/>
    </location>
    <ligand>
        <name>Mn(2+)</name>
        <dbReference type="ChEBI" id="CHEBI:29035"/>
    </ligand>
</feature>
<name>DXR_BACC7</name>
<reference key="1">
    <citation type="submission" date="2008-10" db="EMBL/GenBank/DDBJ databases">
        <title>Genome sequence of Bacillus cereus AH187.</title>
        <authorList>
            <person name="Dodson R.J."/>
            <person name="Durkin A.S."/>
            <person name="Rosovitz M.J."/>
            <person name="Rasko D.A."/>
            <person name="Kolsto A.B."/>
            <person name="Okstad O.A."/>
            <person name="Ravel J."/>
            <person name="Sutton G."/>
        </authorList>
    </citation>
    <scope>NUCLEOTIDE SEQUENCE [LARGE SCALE GENOMIC DNA]</scope>
    <source>
        <strain>AH187</strain>
    </source>
</reference>
<comment type="function">
    <text evidence="1">Catalyzes the NADPH-dependent rearrangement and reduction of 1-deoxy-D-xylulose-5-phosphate (DXP) to 2-C-methyl-D-erythritol 4-phosphate (MEP).</text>
</comment>
<comment type="catalytic activity">
    <reaction evidence="1">
        <text>2-C-methyl-D-erythritol 4-phosphate + NADP(+) = 1-deoxy-D-xylulose 5-phosphate + NADPH + H(+)</text>
        <dbReference type="Rhea" id="RHEA:13717"/>
        <dbReference type="ChEBI" id="CHEBI:15378"/>
        <dbReference type="ChEBI" id="CHEBI:57783"/>
        <dbReference type="ChEBI" id="CHEBI:57792"/>
        <dbReference type="ChEBI" id="CHEBI:58262"/>
        <dbReference type="ChEBI" id="CHEBI:58349"/>
        <dbReference type="EC" id="1.1.1.267"/>
    </reaction>
    <physiologicalReaction direction="right-to-left" evidence="1">
        <dbReference type="Rhea" id="RHEA:13719"/>
    </physiologicalReaction>
</comment>
<comment type="cofactor">
    <cofactor evidence="1">
        <name>Mg(2+)</name>
        <dbReference type="ChEBI" id="CHEBI:18420"/>
    </cofactor>
    <cofactor evidence="1">
        <name>Mn(2+)</name>
        <dbReference type="ChEBI" id="CHEBI:29035"/>
    </cofactor>
</comment>
<comment type="pathway">
    <text evidence="1">Isoprenoid biosynthesis; isopentenyl diphosphate biosynthesis via DXP pathway; isopentenyl diphosphate from 1-deoxy-D-xylulose 5-phosphate: step 1/6.</text>
</comment>
<comment type="similarity">
    <text evidence="1">Belongs to the DXR family.</text>
</comment>
<proteinExistence type="inferred from homology"/>
<evidence type="ECO:0000255" key="1">
    <source>
        <dbReference type="HAMAP-Rule" id="MF_00183"/>
    </source>
</evidence>
<protein>
    <recommendedName>
        <fullName evidence="1">1-deoxy-D-xylulose 5-phosphate reductoisomerase</fullName>
        <shortName evidence="1">DXP reductoisomerase</shortName>
        <ecNumber evidence="1">1.1.1.267</ecNumber>
    </recommendedName>
    <alternativeName>
        <fullName evidence="1">1-deoxyxylulose-5-phosphate reductoisomerase</fullName>
    </alternativeName>
    <alternativeName>
        <fullName evidence="1">2-C-methyl-D-erythritol 4-phosphate synthase</fullName>
    </alternativeName>
</protein>
<keyword id="KW-0414">Isoprene biosynthesis</keyword>
<keyword id="KW-0464">Manganese</keyword>
<keyword id="KW-0479">Metal-binding</keyword>
<keyword id="KW-0521">NADP</keyword>
<keyword id="KW-0560">Oxidoreductase</keyword>
<organism>
    <name type="scientific">Bacillus cereus (strain AH187)</name>
    <dbReference type="NCBI Taxonomy" id="405534"/>
    <lineage>
        <taxon>Bacteria</taxon>
        <taxon>Bacillati</taxon>
        <taxon>Bacillota</taxon>
        <taxon>Bacilli</taxon>
        <taxon>Bacillales</taxon>
        <taxon>Bacillaceae</taxon>
        <taxon>Bacillus</taxon>
        <taxon>Bacillus cereus group</taxon>
    </lineage>
</organism>
<gene>
    <name evidence="1" type="primary">dxr</name>
    <name type="ordered locus">BCAH187_A3868</name>
</gene>
<dbReference type="EC" id="1.1.1.267" evidence="1"/>
<dbReference type="EMBL" id="CP001177">
    <property type="protein sequence ID" value="ACJ77901.1"/>
    <property type="molecule type" value="Genomic_DNA"/>
</dbReference>
<dbReference type="SMR" id="B7HLF4"/>
<dbReference type="KEGG" id="bcr:BCAH187_A3868"/>
<dbReference type="HOGENOM" id="CLU_035714_4_0_9"/>
<dbReference type="UniPathway" id="UPA00056">
    <property type="reaction ID" value="UER00092"/>
</dbReference>
<dbReference type="Proteomes" id="UP000002214">
    <property type="component" value="Chromosome"/>
</dbReference>
<dbReference type="GO" id="GO:0030604">
    <property type="term" value="F:1-deoxy-D-xylulose-5-phosphate reductoisomerase activity"/>
    <property type="evidence" value="ECO:0007669"/>
    <property type="project" value="UniProtKB-UniRule"/>
</dbReference>
<dbReference type="GO" id="GO:0030145">
    <property type="term" value="F:manganese ion binding"/>
    <property type="evidence" value="ECO:0007669"/>
    <property type="project" value="TreeGrafter"/>
</dbReference>
<dbReference type="GO" id="GO:0070402">
    <property type="term" value="F:NADPH binding"/>
    <property type="evidence" value="ECO:0007669"/>
    <property type="project" value="InterPro"/>
</dbReference>
<dbReference type="GO" id="GO:0051484">
    <property type="term" value="P:isopentenyl diphosphate biosynthetic process, methylerythritol 4-phosphate pathway involved in terpenoid biosynthetic process"/>
    <property type="evidence" value="ECO:0007669"/>
    <property type="project" value="TreeGrafter"/>
</dbReference>
<dbReference type="FunFam" id="1.10.1740.10:FF:000005">
    <property type="entry name" value="1-deoxy-D-xylulose 5-phosphate reductoisomerase"/>
    <property type="match status" value="1"/>
</dbReference>
<dbReference type="FunFam" id="3.40.50.720:FF:000045">
    <property type="entry name" value="1-deoxy-D-xylulose 5-phosphate reductoisomerase"/>
    <property type="match status" value="1"/>
</dbReference>
<dbReference type="Gene3D" id="1.10.1740.10">
    <property type="match status" value="1"/>
</dbReference>
<dbReference type="Gene3D" id="3.40.50.720">
    <property type="entry name" value="NAD(P)-binding Rossmann-like Domain"/>
    <property type="match status" value="1"/>
</dbReference>
<dbReference type="HAMAP" id="MF_00183">
    <property type="entry name" value="DXP_reductoisom"/>
    <property type="match status" value="1"/>
</dbReference>
<dbReference type="InterPro" id="IPR003821">
    <property type="entry name" value="DXP_reductoisomerase"/>
</dbReference>
<dbReference type="InterPro" id="IPR013644">
    <property type="entry name" value="DXP_reductoisomerase_C"/>
</dbReference>
<dbReference type="InterPro" id="IPR013512">
    <property type="entry name" value="DXP_reductoisomerase_N"/>
</dbReference>
<dbReference type="InterPro" id="IPR026877">
    <property type="entry name" value="DXPR_C"/>
</dbReference>
<dbReference type="InterPro" id="IPR036169">
    <property type="entry name" value="DXPR_C_sf"/>
</dbReference>
<dbReference type="InterPro" id="IPR036291">
    <property type="entry name" value="NAD(P)-bd_dom_sf"/>
</dbReference>
<dbReference type="NCBIfam" id="TIGR00243">
    <property type="entry name" value="Dxr"/>
    <property type="match status" value="1"/>
</dbReference>
<dbReference type="NCBIfam" id="NF009114">
    <property type="entry name" value="PRK12464.1"/>
    <property type="match status" value="1"/>
</dbReference>
<dbReference type="PANTHER" id="PTHR30525">
    <property type="entry name" value="1-DEOXY-D-XYLULOSE 5-PHOSPHATE REDUCTOISOMERASE"/>
    <property type="match status" value="1"/>
</dbReference>
<dbReference type="PANTHER" id="PTHR30525:SF0">
    <property type="entry name" value="1-DEOXY-D-XYLULOSE 5-PHOSPHATE REDUCTOISOMERASE, CHLOROPLASTIC"/>
    <property type="match status" value="1"/>
</dbReference>
<dbReference type="Pfam" id="PF08436">
    <property type="entry name" value="DXP_redisom_C"/>
    <property type="match status" value="1"/>
</dbReference>
<dbReference type="Pfam" id="PF02670">
    <property type="entry name" value="DXP_reductoisom"/>
    <property type="match status" value="1"/>
</dbReference>
<dbReference type="Pfam" id="PF13288">
    <property type="entry name" value="DXPR_C"/>
    <property type="match status" value="1"/>
</dbReference>
<dbReference type="PIRSF" id="PIRSF006205">
    <property type="entry name" value="Dxp_reductismrs"/>
    <property type="match status" value="1"/>
</dbReference>
<dbReference type="SUPFAM" id="SSF69055">
    <property type="entry name" value="1-deoxy-D-xylulose-5-phosphate reductoisomerase, C-terminal domain"/>
    <property type="match status" value="1"/>
</dbReference>
<dbReference type="SUPFAM" id="SSF55347">
    <property type="entry name" value="Glyceraldehyde-3-phosphate dehydrogenase-like, C-terminal domain"/>
    <property type="match status" value="1"/>
</dbReference>
<dbReference type="SUPFAM" id="SSF51735">
    <property type="entry name" value="NAD(P)-binding Rossmann-fold domains"/>
    <property type="match status" value="1"/>
</dbReference>
<accession>B7HLF4</accession>
<sequence length="380" mass="42287">MKNISLLGASGSIGTQTLDVLRSHPDQFRLVAFSVGKNIDYAVKVIQEFSPQIVSVQREEDVLKLQAVSGNTKIVYGSEGLLEVALHPDAEIVVNAVVGSVGLLPTLRAIEAKKTIGIANKETLVTAGHLVMEAARKHNVSLLPVDSEHSAIFQCLNGENEKRISRLIITASGGSFRDKTRDELHHVTVEDALRHPNWSMGSKITIDSATMMNKGLEVIEAHWLFGIPYEQIDVVLHKESIIHSMVEFEDRSVMAQLGSPDMRVPIQYALTYPDRLPLSDTKQLNLWEMGTLHFEKMNQERFRCLRFAYEAGKTGGSMPAVMNAANEVAVEAFLQKRIGFLTVEDLIEKAMNHHNVIARPSLEEILEIDAATRRFVMEQI</sequence>